<keyword id="KW-0025">Alternative splicing</keyword>
<keyword id="KW-0963">Cytoplasm</keyword>
<keyword id="KW-0398">Inositol biosynthesis</keyword>
<keyword id="KW-0413">Isomerase</keyword>
<keyword id="KW-0444">Lipid biosynthesis</keyword>
<keyword id="KW-0443">Lipid metabolism</keyword>
<keyword id="KW-0520">NAD</keyword>
<keyword id="KW-0594">Phospholipid biosynthesis</keyword>
<keyword id="KW-1208">Phospholipid metabolism</keyword>
<keyword id="KW-0597">Phosphoprotein</keyword>
<keyword id="KW-1185">Reference proteome</keyword>
<evidence type="ECO:0000250" key="1">
    <source>
        <dbReference type="UniProtKB" id="P11986"/>
    </source>
</evidence>
<evidence type="ECO:0000250" key="2">
    <source>
        <dbReference type="UniProtKB" id="Q9NPH2"/>
    </source>
</evidence>
<evidence type="ECO:0000256" key="3">
    <source>
        <dbReference type="SAM" id="MobiDB-lite"/>
    </source>
</evidence>
<evidence type="ECO:0000269" key="4">
    <source>
    </source>
</evidence>
<evidence type="ECO:0000269" key="5">
    <source>
    </source>
</evidence>
<evidence type="ECO:0000269" key="6">
    <source>
    </source>
</evidence>
<evidence type="ECO:0000269" key="7">
    <source>
    </source>
</evidence>
<evidence type="ECO:0000303" key="8">
    <source>
    </source>
</evidence>
<evidence type="ECO:0000305" key="9"/>
<proteinExistence type="evidence at protein level"/>
<comment type="function">
    <text evidence="2 5 6 7">Key enzyme in myo-inositol biosynthesis pathway that catalyzes the conversion of glucose 6-phosphate to 1-myo-inositol 1-phosphate in a NAD-dependent manner (PubMed:23504145, PubMed:6773943, PubMed:885873). Rate-limiting enzyme in the synthesis of all inositol-containing compounds (By similarity).</text>
</comment>
<comment type="function">
    <molecule>Isoform 1</molecule>
    <text evidence="4">Key enzyme in myo-inositol biosynthesis pathway that catalyzes the conversion of glucose 6-phosphate to 1-myo-inositol 1-phosphate in a NAD-dependent manner.</text>
</comment>
<comment type="function">
    <molecule>Isoform 2</molecule>
    <text evidence="4">Competitively inhibits the function of isoform 1, presumably by competing for NAD cofactor.</text>
</comment>
<comment type="catalytic activity">
    <reaction evidence="5 6 7">
        <text>D-glucose 6-phosphate = 1D-myo-inositol 3-phosphate</text>
        <dbReference type="Rhea" id="RHEA:10716"/>
        <dbReference type="ChEBI" id="CHEBI:58401"/>
        <dbReference type="ChEBI" id="CHEBI:61548"/>
        <dbReference type="EC" id="5.5.1.4"/>
    </reaction>
</comment>
<comment type="catalytic activity">
    <molecule>Isoform 1</molecule>
    <reaction evidence="4">
        <text>D-glucose 6-phosphate = 1D-myo-inositol 3-phosphate</text>
        <dbReference type="Rhea" id="RHEA:10716"/>
        <dbReference type="ChEBI" id="CHEBI:58401"/>
        <dbReference type="ChEBI" id="CHEBI:61548"/>
        <dbReference type="EC" id="5.5.1.4"/>
    </reaction>
</comment>
<comment type="cofactor">
    <cofactor evidence="6 7">
        <name>NAD(+)</name>
        <dbReference type="ChEBI" id="CHEBI:57540"/>
    </cofactor>
</comment>
<comment type="cofactor">
    <molecule>Isoform 1</molecule>
    <cofactor evidence="4">
        <name>NAD(+)</name>
        <dbReference type="ChEBI" id="CHEBI:57540"/>
    </cofactor>
</comment>
<comment type="cofactor">
    <molecule>Isoform 2</molecule>
    <cofactor evidence="4">
        <name>NAD(+)</name>
        <dbReference type="ChEBI" id="CHEBI:57540"/>
    </cofactor>
</comment>
<comment type="activity regulation">
    <text evidence="6">Inhibited by 2-deoxyglucitol 6-phosphate (dgtolP) and 2-deoxy-D-glucose 6-phosphate (PubMed:6773943). Inhibited by copper, mercury, cadmium, zinc and copper ions (PubMed:6773943). Activated by potassium and ammonium ions (PubMed:6773943).</text>
</comment>
<comment type="biophysicochemical properties">
    <kinetics>
        <KM evidence="6">3.89 mM for D-glucose 6-phosphate (at pH 7.4 and 37 degrees Celsius)</KM>
    </kinetics>
    <phDependence>
        <text evidence="6">Optimum pH is 7.7.</text>
    </phDependence>
</comment>
<comment type="pathway">
    <text>Polyol metabolism; myo-inositol biosynthesis; myo-inositol from D-glucose 6-phosphate: step 1/2.</text>
</comment>
<comment type="subunit">
    <text evidence="6">Homotrimer.</text>
</comment>
<comment type="subcellular location">
    <subcellularLocation>
        <location evidence="1">Cytoplasm</location>
    </subcellularLocation>
</comment>
<comment type="alternative products">
    <event type="alternative splicing"/>
    <isoform>
        <id>Q6AYK3-1</id>
        <name>1</name>
        <name evidence="8">alpha</name>
        <sequence type="displayed"/>
    </isoform>
    <isoform>
        <id>Q6AYK3-3</id>
        <name>2</name>
        <name evidence="8">gammac</name>
        <sequence type="described" ref="VSP_061662"/>
    </isoform>
    <isoform>
        <id>Q6AYK3-5</id>
        <name>3</name>
        <sequence type="described" ref="VSP_061663"/>
    </isoform>
</comment>
<comment type="tissue specificity">
    <text evidence="4 5 6 7">Expressed in testis, brain and epididymis (at protein level) (PubMed:19188364, PubMed:23504145, PubMed:6773943, PubMed:885873). Moderately expressed in brain, lung, liver, and kidney (PubMed:19188364). Low expression in heart and spleen (PubMed:19188364). Very low expression in skeletal muscle (PubMed:19188364).</text>
</comment>
<comment type="tissue specificity">
    <molecule>Isoform 1</molecule>
    <text evidence="4">Expressed in testis, spleen, heart, brainstem, hippocampus, cerebellum, cortex and amygdala (PubMed:19188364). Absent or very lowly expressed in intestine, lung and muscle (PubMed:19188364).</text>
</comment>
<comment type="tissue specificity">
    <molecule>Isoform 2</molecule>
    <text evidence="4">Expressed in intestine, lung, liver, muscle, testis, spleen, brainstem, hippocampus, cerebellum, cortex and amygdala (PubMed:19188364). Absent or lowly expressed in heart and kidney (PubMed:19188364).</text>
</comment>
<comment type="tissue specificity">
    <molecule>Isoform 3</molecule>
    <text evidence="4 5">Expressed in intestine (at protein level).</text>
</comment>
<comment type="PTM">
    <text evidence="5">Phosphorylation at Ser-524 does not appear to affect enzyme activity, and is detected in brain and testis.</text>
</comment>
<comment type="similarity">
    <text evidence="9">Belongs to the myo-inositol 1-phosphate synthase family.</text>
</comment>
<reference key="1">
    <citation type="journal article" date="2004" name="Nature">
        <title>Genome sequence of the Brown Norway rat yields insights into mammalian evolution.</title>
        <authorList>
            <person name="Gibbs R.A."/>
            <person name="Weinstock G.M."/>
            <person name="Metzker M.L."/>
            <person name="Muzny D.M."/>
            <person name="Sodergren E.J."/>
            <person name="Scherer S."/>
            <person name="Scott G."/>
            <person name="Steffen D."/>
            <person name="Worley K.C."/>
            <person name="Burch P.E."/>
            <person name="Okwuonu G."/>
            <person name="Hines S."/>
            <person name="Lewis L."/>
            <person name="Deramo C."/>
            <person name="Delgado O."/>
            <person name="Dugan-Rocha S."/>
            <person name="Miner G."/>
            <person name="Morgan M."/>
            <person name="Hawes A."/>
            <person name="Gill R."/>
            <person name="Holt R.A."/>
            <person name="Adams M.D."/>
            <person name="Amanatides P.G."/>
            <person name="Baden-Tillson H."/>
            <person name="Barnstead M."/>
            <person name="Chin S."/>
            <person name="Evans C.A."/>
            <person name="Ferriera S."/>
            <person name="Fosler C."/>
            <person name="Glodek A."/>
            <person name="Gu Z."/>
            <person name="Jennings D."/>
            <person name="Kraft C.L."/>
            <person name="Nguyen T."/>
            <person name="Pfannkoch C.M."/>
            <person name="Sitter C."/>
            <person name="Sutton G.G."/>
            <person name="Venter J.C."/>
            <person name="Woodage T."/>
            <person name="Smith D."/>
            <person name="Lee H.-M."/>
            <person name="Gustafson E."/>
            <person name="Cahill P."/>
            <person name="Kana A."/>
            <person name="Doucette-Stamm L."/>
            <person name="Weinstock K."/>
            <person name="Fechtel K."/>
            <person name="Weiss R.B."/>
            <person name="Dunn D.M."/>
            <person name="Green E.D."/>
            <person name="Blakesley R.W."/>
            <person name="Bouffard G.G."/>
            <person name="De Jong P.J."/>
            <person name="Osoegawa K."/>
            <person name="Zhu B."/>
            <person name="Marra M."/>
            <person name="Schein J."/>
            <person name="Bosdet I."/>
            <person name="Fjell C."/>
            <person name="Jones S."/>
            <person name="Krzywinski M."/>
            <person name="Mathewson C."/>
            <person name="Siddiqui A."/>
            <person name="Wye N."/>
            <person name="McPherson J."/>
            <person name="Zhao S."/>
            <person name="Fraser C.M."/>
            <person name="Shetty J."/>
            <person name="Shatsman S."/>
            <person name="Geer K."/>
            <person name="Chen Y."/>
            <person name="Abramzon S."/>
            <person name="Nierman W.C."/>
            <person name="Havlak P.H."/>
            <person name="Chen R."/>
            <person name="Durbin K.J."/>
            <person name="Egan A."/>
            <person name="Ren Y."/>
            <person name="Song X.-Z."/>
            <person name="Li B."/>
            <person name="Liu Y."/>
            <person name="Qin X."/>
            <person name="Cawley S."/>
            <person name="Cooney A.J."/>
            <person name="D'Souza L.M."/>
            <person name="Martin K."/>
            <person name="Wu J.Q."/>
            <person name="Gonzalez-Garay M.L."/>
            <person name="Jackson A.R."/>
            <person name="Kalafus K.J."/>
            <person name="McLeod M.P."/>
            <person name="Milosavljevic A."/>
            <person name="Virk D."/>
            <person name="Volkov A."/>
            <person name="Wheeler D.A."/>
            <person name="Zhang Z."/>
            <person name="Bailey J.A."/>
            <person name="Eichler E.E."/>
            <person name="Tuzun E."/>
            <person name="Birney E."/>
            <person name="Mongin E."/>
            <person name="Ureta-Vidal A."/>
            <person name="Woodwark C."/>
            <person name="Zdobnov E."/>
            <person name="Bork P."/>
            <person name="Suyama M."/>
            <person name="Torrents D."/>
            <person name="Alexandersson M."/>
            <person name="Trask B.J."/>
            <person name="Young J.M."/>
            <person name="Huang H."/>
            <person name="Wang H."/>
            <person name="Xing H."/>
            <person name="Daniels S."/>
            <person name="Gietzen D."/>
            <person name="Schmidt J."/>
            <person name="Stevens K."/>
            <person name="Vitt U."/>
            <person name="Wingrove J."/>
            <person name="Camara F."/>
            <person name="Mar Alba M."/>
            <person name="Abril J.F."/>
            <person name="Guigo R."/>
            <person name="Smit A."/>
            <person name="Dubchak I."/>
            <person name="Rubin E.M."/>
            <person name="Couronne O."/>
            <person name="Poliakov A."/>
            <person name="Huebner N."/>
            <person name="Ganten D."/>
            <person name="Goesele C."/>
            <person name="Hummel O."/>
            <person name="Kreitler T."/>
            <person name="Lee Y.-A."/>
            <person name="Monti J."/>
            <person name="Schulz H."/>
            <person name="Zimdahl H."/>
            <person name="Himmelbauer H."/>
            <person name="Lehrach H."/>
            <person name="Jacob H.J."/>
            <person name="Bromberg S."/>
            <person name="Gullings-Handley J."/>
            <person name="Jensen-Seaman M.I."/>
            <person name="Kwitek A.E."/>
            <person name="Lazar J."/>
            <person name="Pasko D."/>
            <person name="Tonellato P.J."/>
            <person name="Twigger S."/>
            <person name="Ponting C.P."/>
            <person name="Duarte J.M."/>
            <person name="Rice S."/>
            <person name="Goodstadt L."/>
            <person name="Beatson S.A."/>
            <person name="Emes R.D."/>
            <person name="Winter E.E."/>
            <person name="Webber C."/>
            <person name="Brandt P."/>
            <person name="Nyakatura G."/>
            <person name="Adetobi M."/>
            <person name="Chiaromonte F."/>
            <person name="Elnitski L."/>
            <person name="Eswara P."/>
            <person name="Hardison R.C."/>
            <person name="Hou M."/>
            <person name="Kolbe D."/>
            <person name="Makova K."/>
            <person name="Miller W."/>
            <person name="Nekrutenko A."/>
            <person name="Riemer C."/>
            <person name="Schwartz S."/>
            <person name="Taylor J."/>
            <person name="Yang S."/>
            <person name="Zhang Y."/>
            <person name="Lindpaintner K."/>
            <person name="Andrews T.D."/>
            <person name="Caccamo M."/>
            <person name="Clamp M."/>
            <person name="Clarke L."/>
            <person name="Curwen V."/>
            <person name="Durbin R.M."/>
            <person name="Eyras E."/>
            <person name="Searle S.M."/>
            <person name="Cooper G.M."/>
            <person name="Batzoglou S."/>
            <person name="Brudno M."/>
            <person name="Sidow A."/>
            <person name="Stone E.A."/>
            <person name="Payseur B.A."/>
            <person name="Bourque G."/>
            <person name="Lopez-Otin C."/>
            <person name="Puente X.S."/>
            <person name="Chakrabarti K."/>
            <person name="Chatterji S."/>
            <person name="Dewey C."/>
            <person name="Pachter L."/>
            <person name="Bray N."/>
            <person name="Yap V.B."/>
            <person name="Caspi A."/>
            <person name="Tesler G."/>
            <person name="Pevzner P.A."/>
            <person name="Haussler D."/>
            <person name="Roskin K.M."/>
            <person name="Baertsch R."/>
            <person name="Clawson H."/>
            <person name="Furey T.S."/>
            <person name="Hinrichs A.S."/>
            <person name="Karolchik D."/>
            <person name="Kent W.J."/>
            <person name="Rosenbloom K.R."/>
            <person name="Trumbower H."/>
            <person name="Weirauch M."/>
            <person name="Cooper D.N."/>
            <person name="Stenson P.D."/>
            <person name="Ma B."/>
            <person name="Brent M."/>
            <person name="Arumugam M."/>
            <person name="Shteynberg D."/>
            <person name="Copley R.R."/>
            <person name="Taylor M.S."/>
            <person name="Riethman H."/>
            <person name="Mudunuri U."/>
            <person name="Peterson J."/>
            <person name="Guyer M."/>
            <person name="Felsenfeld A."/>
            <person name="Old S."/>
            <person name="Mockrin S."/>
            <person name="Collins F.S."/>
        </authorList>
    </citation>
    <scope>NUCLEOTIDE SEQUENCE [LARGE SCALE GENOMIC DNA]</scope>
    <source>
        <strain>Brown Norway</strain>
    </source>
</reference>
<reference key="2">
    <citation type="journal article" date="1977" name="J. Biol. Chem.">
        <title>Incubations of testis myo-inositol-1-phosphate synthase with D-(5-18O)glucose 6-phosphate and with H218O show no evidence of Schiff base formation.</title>
        <authorList>
            <person name="Sherman W.R."/>
            <person name="Rasheed A."/>
            <person name="Mauck L.A."/>
            <person name="Wiecko J."/>
        </authorList>
    </citation>
    <scope>FUNCTION</scope>
    <scope>CATALYTIC ACTIVITY</scope>
    <scope>COFACTOR</scope>
    <scope>TISSUE SPECIFICITY</scope>
</reference>
<reference key="3">
    <citation type="journal article" date="1980" name="J. Biol. Chem.">
        <title>Purification, structure, and catalytic properties of L-myo-inositol-1-phosphate synthase from rat testis.</title>
        <authorList>
            <person name="Maeda T."/>
            <person name="Eisenberg F. Jr."/>
        </authorList>
    </citation>
    <scope>FUNCTION</scope>
    <scope>CATALYTIC ACTIVITY</scope>
    <scope>COFACTOR</scope>
    <scope>BIOPHYSICOCHEMICAL PROPERTIES</scope>
    <scope>ACTIVITY REGULATION</scope>
    <scope>SUBUNIT</scope>
    <scope>TISSUE SPECIFICITY</scope>
</reference>
<reference key="4">
    <citation type="journal article" date="2009" name="J. Biol. Chem.">
        <title>Identification of myo-inositol-3-phosphate synthase isoforms: characterization, expression, and putative role of a 16-kDa gamma(c) isoform.</title>
        <authorList>
            <person name="Seelan R.S."/>
            <person name="Lakshmanan J."/>
            <person name="Casanova M.F."/>
            <person name="Parthasarathy R.N."/>
        </authorList>
    </citation>
    <scope>FUNCTION (ISOFORMS 1 AND 2)</scope>
    <scope>CATALYTIC ACTIVITY (ISOFORM 1)</scope>
    <scope>COFACTOR (ISOFORMS 1 AND 2)</scope>
    <scope>ALTERNATIVE SPLICING</scope>
    <scope>IDENTIFICATION BY MASS SPECTROMETRY</scope>
    <scope>TISSUE SPECIFICITY (ISOFORMS 1; 2 AND 3)</scope>
</reference>
<reference key="5">
    <citation type="journal article" date="2013" name="Mol. Cell. Biochem.">
        <title>Rat brain myo-inositol 3-phosphate synthase is a phosphoprotein.</title>
        <authorList>
            <person name="Parthasarathy R.N."/>
            <person name="Lakshmanan J."/>
            <person name="Thangavel M."/>
            <person name="Seelan R.S."/>
            <person name="Stagner J.I."/>
            <person name="Janckila A.J."/>
            <person name="Vadnal R.E."/>
            <person name="Casanova M.F."/>
            <person name="Parthasarathy L.K."/>
        </authorList>
    </citation>
    <scope>FUNCTION</scope>
    <scope>CATALYTIC ACTIVITY</scope>
    <scope>TISSUE SPECIFICITY (ISOFORM 3)</scope>
    <scope>IDENTIFICATION BY MASS SPECTROMETRY</scope>
    <scope>PHOSPHORYLATION AT SER-524</scope>
</reference>
<organism>
    <name type="scientific">Rattus norvegicus</name>
    <name type="common">Rat</name>
    <dbReference type="NCBI Taxonomy" id="10116"/>
    <lineage>
        <taxon>Eukaryota</taxon>
        <taxon>Metazoa</taxon>
        <taxon>Chordata</taxon>
        <taxon>Craniata</taxon>
        <taxon>Vertebrata</taxon>
        <taxon>Euteleostomi</taxon>
        <taxon>Mammalia</taxon>
        <taxon>Eutheria</taxon>
        <taxon>Euarchontoglires</taxon>
        <taxon>Glires</taxon>
        <taxon>Rodentia</taxon>
        <taxon>Myomorpha</taxon>
        <taxon>Muroidea</taxon>
        <taxon>Muridae</taxon>
        <taxon>Murinae</taxon>
        <taxon>Rattus</taxon>
    </lineage>
</organism>
<protein>
    <recommendedName>
        <fullName>Inositol-3-phosphate synthase 1</fullName>
        <shortName>IPS 1</shortName>
        <ecNumber evidence="4 5 6 7">5.5.1.4</ecNumber>
    </recommendedName>
    <alternativeName>
        <fullName>Myo-inositol 1-phosphate synthase</fullName>
        <shortName>MI-1-P synthase</shortName>
        <shortName>MIP synthase</shortName>
    </alternativeName>
</protein>
<dbReference type="EC" id="5.5.1.4" evidence="4 5 6 7"/>
<dbReference type="EMBL" id="AABR03100304">
    <property type="status" value="NOT_ANNOTATED_CDS"/>
    <property type="molecule type" value="Genomic_DNA"/>
</dbReference>
<dbReference type="RefSeq" id="NP_001013902.2">
    <molecule id="Q6AYK3-1"/>
    <property type="nucleotide sequence ID" value="NM_001013880.2"/>
</dbReference>
<dbReference type="SMR" id="Q6AYK3"/>
<dbReference type="BioGRID" id="253271">
    <property type="interactions" value="1"/>
</dbReference>
<dbReference type="FunCoup" id="Q6AYK3">
    <property type="interactions" value="1538"/>
</dbReference>
<dbReference type="STRING" id="10116.ENSRNOP00000026821"/>
<dbReference type="iPTMnet" id="Q6AYK3"/>
<dbReference type="PhosphoSitePlus" id="Q6AYK3"/>
<dbReference type="SwissPalm" id="Q6AYK3"/>
<dbReference type="PaxDb" id="10116-ENSRNOP00000026821"/>
<dbReference type="Ensembl" id="ENSRNOT00000026821.6">
    <molecule id="Q6AYK3-1"/>
    <property type="protein sequence ID" value="ENSRNOP00000026821.3"/>
    <property type="gene ID" value="ENSRNOG00000019741.6"/>
</dbReference>
<dbReference type="GeneID" id="290651"/>
<dbReference type="KEGG" id="rno:290651"/>
<dbReference type="UCSC" id="RGD:1359423">
    <molecule id="Q6AYK3-1"/>
    <property type="organism name" value="rat"/>
</dbReference>
<dbReference type="AGR" id="RGD:1359423"/>
<dbReference type="CTD" id="51477"/>
<dbReference type="RGD" id="1359423">
    <property type="gene designation" value="Isyna1"/>
</dbReference>
<dbReference type="eggNOG" id="KOG0693">
    <property type="taxonomic scope" value="Eukaryota"/>
</dbReference>
<dbReference type="GeneTree" id="ENSGT00390000018395"/>
<dbReference type="HOGENOM" id="CLU_021486_2_0_1"/>
<dbReference type="InParanoid" id="Q6AYK3"/>
<dbReference type="OMA" id="VYVPMKE"/>
<dbReference type="OrthoDB" id="17754at9989"/>
<dbReference type="PhylomeDB" id="Q6AYK3"/>
<dbReference type="TreeFam" id="TF300382"/>
<dbReference type="BRENDA" id="5.5.1.4">
    <property type="organism ID" value="5301"/>
</dbReference>
<dbReference type="Reactome" id="R-RNO-1855183">
    <property type="pathway name" value="Synthesis of IP2, IP, and Ins in the cytosol"/>
</dbReference>
<dbReference type="SABIO-RK" id="Q6AYK3"/>
<dbReference type="UniPathway" id="UPA00823">
    <property type="reaction ID" value="UER00787"/>
</dbReference>
<dbReference type="PRO" id="PR:Q6AYK3"/>
<dbReference type="Proteomes" id="UP000002494">
    <property type="component" value="Chromosome 16"/>
</dbReference>
<dbReference type="Bgee" id="ENSRNOG00000019741">
    <property type="expression patterns" value="Expressed in ovary and 20 other cell types or tissues"/>
</dbReference>
<dbReference type="GO" id="GO:0005737">
    <property type="term" value="C:cytoplasm"/>
    <property type="evidence" value="ECO:0000318"/>
    <property type="project" value="GO_Central"/>
</dbReference>
<dbReference type="GO" id="GO:0004512">
    <property type="term" value="F:inositol-3-phosphate synthase activity"/>
    <property type="evidence" value="ECO:0000314"/>
    <property type="project" value="UniProtKB"/>
</dbReference>
<dbReference type="GO" id="GO:0006021">
    <property type="term" value="P:inositol biosynthetic process"/>
    <property type="evidence" value="ECO:0000314"/>
    <property type="project" value="UniProtKB"/>
</dbReference>
<dbReference type="GO" id="GO:1900089">
    <property type="term" value="P:negative regulation of inositol biosynthetic process"/>
    <property type="evidence" value="ECO:0000314"/>
    <property type="project" value="UniProtKB"/>
</dbReference>
<dbReference type="GO" id="GO:0008654">
    <property type="term" value="P:phospholipid biosynthetic process"/>
    <property type="evidence" value="ECO:0007669"/>
    <property type="project" value="UniProtKB-KW"/>
</dbReference>
<dbReference type="FunFam" id="3.40.50.720:FF:000069">
    <property type="entry name" value="Inositol-3-phosphate synthase 1"/>
    <property type="match status" value="1"/>
</dbReference>
<dbReference type="FunFam" id="3.40.50.720:FF:000171">
    <property type="entry name" value="inositol-3-phosphate synthase 1"/>
    <property type="match status" value="1"/>
</dbReference>
<dbReference type="Gene3D" id="3.40.50.720">
    <property type="entry name" value="NAD(P)-binding Rossmann-like Domain"/>
    <property type="match status" value="2"/>
</dbReference>
<dbReference type="InterPro" id="IPR002587">
    <property type="entry name" value="Myo-inos-1-P_Synthase"/>
</dbReference>
<dbReference type="InterPro" id="IPR013021">
    <property type="entry name" value="Myo-inos-1-P_Synthase_GAPDH"/>
</dbReference>
<dbReference type="InterPro" id="IPR036291">
    <property type="entry name" value="NAD(P)-bd_dom_sf"/>
</dbReference>
<dbReference type="PANTHER" id="PTHR11510">
    <property type="entry name" value="MYO-INOSITOL-1 PHOSPHATE SYNTHASE"/>
    <property type="match status" value="1"/>
</dbReference>
<dbReference type="Pfam" id="PF01658">
    <property type="entry name" value="Inos-1-P_synth"/>
    <property type="match status" value="1"/>
</dbReference>
<dbReference type="Pfam" id="PF07994">
    <property type="entry name" value="NAD_binding_5"/>
    <property type="match status" value="1"/>
</dbReference>
<dbReference type="PIRSF" id="PIRSF015578">
    <property type="entry name" value="Myoinos-ppht_syn"/>
    <property type="match status" value="1"/>
</dbReference>
<dbReference type="SUPFAM" id="SSF55347">
    <property type="entry name" value="Glyceraldehyde-3-phosphate dehydrogenase-like, C-terminal domain"/>
    <property type="match status" value="1"/>
</dbReference>
<dbReference type="SUPFAM" id="SSF51735">
    <property type="entry name" value="NAD(P)-binding Rossmann-fold domains"/>
    <property type="match status" value="1"/>
</dbReference>
<name>INO1_RAT</name>
<gene>
    <name type="primary">Isyna1</name>
    <name type="synonym">Ino1</name>
</gene>
<sequence>MEPAAEILVDSPDVIFGPEAIEARYEYRTTRVSREGGVLRVRPTATRFTFRTARQVPRLGVMLVGWGGNNGSTLTAAVLANRLRLTWPTRTGRKEANYYGSLTQAGTVNLGLDGDGREVFVPFSALLPMVAPNDLVFDGWDISSLNLAEAMRRAQVLDCGLQEQLWPHMESLRPRPSVYIPEFIAANQTARADNLIPGTRAQQLEQIRKDIRDFRSSAGLDKVIVLWTANTERFCEVVPGRNDTAENLLRTIQLGLEVSPSTLFAVASILEGCAFLNGSPQNTLVPGALELASQRHVFVGGDDFKSGQTKVKSVLVDFLIGSGLKTMSIVSYNHLGNNDGQNLSAPLQFRSKEVTKSSVVDDMVQSNRVLYAPGEEPDHCVVIKYVPYVGDSKRALDEYTSELMLGGTNTLVLHNTCEDSLLAAPIMLDLVLLTELCQRVSFCTDSDPEPQGFHPVLSVLSFLFKAPLVPPGSPVVNALFRQRSCIENIFRACVGLPPQNHMLLEHKMERPFPGIKPEEVKATSPLPCKKESTPATNGCTGDANGHTQAPTPELSTA</sequence>
<feature type="chain" id="PRO_0000324631" description="Inositol-3-phosphate synthase 1">
    <location>
        <begin position="1"/>
        <end position="557"/>
    </location>
</feature>
<feature type="region of interest" description="Disordered" evidence="3">
    <location>
        <begin position="514"/>
        <end position="557"/>
    </location>
</feature>
<feature type="compositionally biased region" description="Polar residues" evidence="3">
    <location>
        <begin position="533"/>
        <end position="557"/>
    </location>
</feature>
<feature type="binding site" evidence="1">
    <location>
        <position position="67"/>
    </location>
    <ligand>
        <name>NAD(+)</name>
        <dbReference type="ChEBI" id="CHEBI:57540"/>
    </ligand>
</feature>
<feature type="binding site" evidence="1">
    <location>
        <position position="68"/>
    </location>
    <ligand>
        <name>NAD(+)</name>
        <dbReference type="ChEBI" id="CHEBI:57540"/>
    </ligand>
</feature>
<feature type="binding site" evidence="1">
    <location>
        <position position="69"/>
    </location>
    <ligand>
        <name>NAD(+)</name>
        <dbReference type="ChEBI" id="CHEBI:57540"/>
    </ligand>
</feature>
<feature type="binding site" evidence="1">
    <location>
        <position position="70"/>
    </location>
    <ligand>
        <name>NAD(+)</name>
        <dbReference type="ChEBI" id="CHEBI:57540"/>
    </ligand>
</feature>
<feature type="binding site" evidence="1">
    <location>
        <position position="141"/>
    </location>
    <ligand>
        <name>NAD(+)</name>
        <dbReference type="ChEBI" id="CHEBI:57540"/>
    </ligand>
</feature>
<feature type="binding site" evidence="1">
    <location>
        <position position="177"/>
    </location>
    <ligand>
        <name>NAD(+)</name>
        <dbReference type="ChEBI" id="CHEBI:57540"/>
    </ligand>
</feature>
<feature type="binding site" evidence="1">
    <location>
        <position position="178"/>
    </location>
    <ligand>
        <name>NAD(+)</name>
        <dbReference type="ChEBI" id="CHEBI:57540"/>
    </ligand>
</feature>
<feature type="binding site" evidence="1">
    <location>
        <position position="188"/>
    </location>
    <ligand>
        <name>NAD(+)</name>
        <dbReference type="ChEBI" id="CHEBI:57540"/>
    </ligand>
</feature>
<feature type="binding site" evidence="1">
    <location>
        <position position="191"/>
    </location>
    <ligand>
        <name>NAD(+)</name>
        <dbReference type="ChEBI" id="CHEBI:57540"/>
    </ligand>
</feature>
<feature type="binding site" evidence="1">
    <location>
        <position position="228"/>
    </location>
    <ligand>
        <name>NAD(+)</name>
        <dbReference type="ChEBI" id="CHEBI:57540"/>
    </ligand>
</feature>
<feature type="binding site" evidence="1">
    <location>
        <position position="229"/>
    </location>
    <ligand>
        <name>NAD(+)</name>
        <dbReference type="ChEBI" id="CHEBI:57540"/>
    </ligand>
</feature>
<feature type="binding site" evidence="1">
    <location>
        <position position="230"/>
    </location>
    <ligand>
        <name>NAD(+)</name>
        <dbReference type="ChEBI" id="CHEBI:57540"/>
    </ligand>
</feature>
<feature type="binding site" evidence="1">
    <location>
        <position position="231"/>
    </location>
    <ligand>
        <name>NAD(+)</name>
        <dbReference type="ChEBI" id="CHEBI:57540"/>
    </ligand>
</feature>
<feature type="binding site" evidence="1">
    <location>
        <position position="278"/>
    </location>
    <ligand>
        <name>NAD(+)</name>
        <dbReference type="ChEBI" id="CHEBI:57540"/>
    </ligand>
</feature>
<feature type="binding site" evidence="1">
    <location>
        <position position="279"/>
    </location>
    <ligand>
        <name>NAD(+)</name>
        <dbReference type="ChEBI" id="CHEBI:57540"/>
    </ligand>
</feature>
<feature type="binding site" evidence="1">
    <location>
        <position position="303"/>
    </location>
    <ligand>
        <name>NAD(+)</name>
        <dbReference type="ChEBI" id="CHEBI:57540"/>
    </ligand>
</feature>
<feature type="binding site" evidence="1">
    <location>
        <position position="306"/>
    </location>
    <ligand>
        <name>NAD(+)</name>
        <dbReference type="ChEBI" id="CHEBI:57540"/>
    </ligand>
</feature>
<feature type="binding site" evidence="1">
    <location>
        <position position="337"/>
    </location>
    <ligand>
        <name>NAD(+)</name>
        <dbReference type="ChEBI" id="CHEBI:57540"/>
    </ligand>
</feature>
<feature type="binding site" evidence="1">
    <location>
        <position position="338"/>
    </location>
    <ligand>
        <name>NAD(+)</name>
        <dbReference type="ChEBI" id="CHEBI:57540"/>
    </ligand>
</feature>
<feature type="binding site" evidence="1">
    <location>
        <position position="339"/>
    </location>
    <ligand>
        <name>NAD(+)</name>
        <dbReference type="ChEBI" id="CHEBI:57540"/>
    </ligand>
</feature>
<feature type="binding site" evidence="1">
    <location>
        <position position="352"/>
    </location>
    <ligand>
        <name>NAD(+)</name>
        <dbReference type="ChEBI" id="CHEBI:57540"/>
    </ligand>
</feature>
<feature type="binding site" evidence="1">
    <location>
        <position position="390"/>
    </location>
    <ligand>
        <name>NAD(+)</name>
        <dbReference type="ChEBI" id="CHEBI:57540"/>
    </ligand>
</feature>
<feature type="binding site" evidence="1">
    <location>
        <position position="391"/>
    </location>
    <ligand>
        <name>NAD(+)</name>
        <dbReference type="ChEBI" id="CHEBI:57540"/>
    </ligand>
</feature>
<feature type="binding site" evidence="1">
    <location>
        <position position="419"/>
    </location>
    <ligand>
        <name>NAD(+)</name>
        <dbReference type="ChEBI" id="CHEBI:57540"/>
    </ligand>
</feature>
<feature type="binding site" evidence="1">
    <location>
        <position position="420"/>
    </location>
    <ligand>
        <name>NAD(+)</name>
        <dbReference type="ChEBI" id="CHEBI:57540"/>
    </ligand>
</feature>
<feature type="modified residue" description="Phosphoserine" evidence="2">
    <location>
        <position position="279"/>
    </location>
</feature>
<feature type="modified residue" description="Phosphoserine" evidence="2">
    <location>
        <position position="357"/>
    </location>
</feature>
<feature type="modified residue" description="Phosphoserine" evidence="5">
    <location>
        <position position="524"/>
    </location>
</feature>
<feature type="splice variant" id="VSP_061662" description="In isoform 2." evidence="4">
    <original>GWDISSLNLAEAMRRAQVLDCGLQEQLWPHMESLRPRPSVYIPEFIAANQTARADNLIPGTRAQQLEQIRKDIRDFRSSAGLDKVIVLWTANTERFCEVVPGRNDTAENLLRTIQLGLEVSPSTLFAVASILEGCAFLNGSPQNTLVPGALELASQRHVFVGGDDFKSGQTKVKSVLVDFLIGSGLKTMSIVSYNHLGNNDGQNLSAPLQFRSKEVTKSSVVDDMVQSNRVLYAPGEEPDHCVVIKYVPYVGDSKRALDEYTSELMLGGTNTLVLHNTCEDSLLAAPIMLDLVLLTELCQRVSFCTDSDPEPQGFHPVLSVLSFLFKAPLVPPGSPVVNALFRQRSCIENIFRACVGLPPQNHMLLEHKMERPFPGIKPEEVKATSPLPCKKESTPATNGCTGDANGHTQAPTPELSTA</original>
    <variation>GGQSLGMGWG</variation>
    <location>
        <begin position="139"/>
        <end position="557"/>
    </location>
</feature>
<feature type="splice variant" id="VSP_061663" description="In isoform 3.">
    <location>
        <begin position="492"/>
        <end position="557"/>
    </location>
</feature>
<accession>Q6AYK3</accession>